<organism>
    <name type="scientific">Albidiferax ferrireducens (strain ATCC BAA-621 / DSM 15236 / T118)</name>
    <name type="common">Rhodoferax ferrireducens</name>
    <dbReference type="NCBI Taxonomy" id="338969"/>
    <lineage>
        <taxon>Bacteria</taxon>
        <taxon>Pseudomonadati</taxon>
        <taxon>Pseudomonadota</taxon>
        <taxon>Betaproteobacteria</taxon>
        <taxon>Burkholderiales</taxon>
        <taxon>Comamonadaceae</taxon>
        <taxon>Rhodoferax</taxon>
    </lineage>
</organism>
<accession>Q21XJ9</accession>
<feature type="chain" id="PRO_0000279957" description="Aliphatic sulfonates import ATP-binding protein SsuB">
    <location>
        <begin position="1"/>
        <end position="278"/>
    </location>
</feature>
<feature type="domain" description="ABC transporter" evidence="1">
    <location>
        <begin position="15"/>
        <end position="236"/>
    </location>
</feature>
<feature type="region of interest" description="Disordered" evidence="2">
    <location>
        <begin position="251"/>
        <end position="278"/>
    </location>
</feature>
<feature type="compositionally biased region" description="Basic and acidic residues" evidence="2">
    <location>
        <begin position="251"/>
        <end position="264"/>
    </location>
</feature>
<feature type="binding site" evidence="1">
    <location>
        <begin position="47"/>
        <end position="54"/>
    </location>
    <ligand>
        <name>ATP</name>
        <dbReference type="ChEBI" id="CHEBI:30616"/>
    </ligand>
</feature>
<comment type="function">
    <text evidence="1">Part of the ABC transporter complex SsuABC involved in aliphatic sulfonates import. Responsible for energy coupling to the transport system.</text>
</comment>
<comment type="catalytic activity">
    <reaction evidence="1">
        <text>ATP + H2O + aliphatic sulfonate-[sulfonate-binding protein]Side 1 = ADP + phosphate + aliphatic sulfonateSide 2 + [sulfonate-binding protein]Side 1.</text>
        <dbReference type="EC" id="7.6.2.14"/>
    </reaction>
</comment>
<comment type="subunit">
    <text evidence="1">The complex is composed of two ATP-binding proteins (SsuB), two transmembrane proteins (SsuC) and a solute-binding protein (SsuA).</text>
</comment>
<comment type="subcellular location">
    <subcellularLocation>
        <location evidence="1">Cell inner membrane</location>
        <topology evidence="1">Peripheral membrane protein</topology>
    </subcellularLocation>
</comment>
<comment type="similarity">
    <text evidence="1">Belongs to the ABC transporter superfamily. Aliphatic sulfonates importer (TC 3.A.1.17.2) family.</text>
</comment>
<proteinExistence type="inferred from homology"/>
<dbReference type="EC" id="7.6.2.14" evidence="1"/>
<dbReference type="EMBL" id="CP000267">
    <property type="protein sequence ID" value="ABD69504.1"/>
    <property type="molecule type" value="Genomic_DNA"/>
</dbReference>
<dbReference type="RefSeq" id="WP_011464072.1">
    <property type="nucleotide sequence ID" value="NC_007908.1"/>
</dbReference>
<dbReference type="SMR" id="Q21XJ9"/>
<dbReference type="STRING" id="338969.Rfer_1775"/>
<dbReference type="KEGG" id="rfr:Rfer_1775"/>
<dbReference type="eggNOG" id="COG1116">
    <property type="taxonomic scope" value="Bacteria"/>
</dbReference>
<dbReference type="HOGENOM" id="CLU_000604_1_22_4"/>
<dbReference type="OrthoDB" id="8683598at2"/>
<dbReference type="Proteomes" id="UP000008332">
    <property type="component" value="Chromosome"/>
</dbReference>
<dbReference type="GO" id="GO:0005886">
    <property type="term" value="C:plasma membrane"/>
    <property type="evidence" value="ECO:0007669"/>
    <property type="project" value="UniProtKB-SubCell"/>
</dbReference>
<dbReference type="GO" id="GO:0005524">
    <property type="term" value="F:ATP binding"/>
    <property type="evidence" value="ECO:0007669"/>
    <property type="project" value="UniProtKB-KW"/>
</dbReference>
<dbReference type="GO" id="GO:0016887">
    <property type="term" value="F:ATP hydrolysis activity"/>
    <property type="evidence" value="ECO:0007669"/>
    <property type="project" value="InterPro"/>
</dbReference>
<dbReference type="CDD" id="cd03293">
    <property type="entry name" value="ABC_NrtD_SsuB_transporters"/>
    <property type="match status" value="1"/>
</dbReference>
<dbReference type="FunFam" id="3.40.50.300:FF:000653">
    <property type="entry name" value="Aliphatic sulfonates import ATP-binding protein SsuB"/>
    <property type="match status" value="1"/>
</dbReference>
<dbReference type="Gene3D" id="3.40.50.300">
    <property type="entry name" value="P-loop containing nucleotide triphosphate hydrolases"/>
    <property type="match status" value="1"/>
</dbReference>
<dbReference type="InterPro" id="IPR003593">
    <property type="entry name" value="AAA+_ATPase"/>
</dbReference>
<dbReference type="InterPro" id="IPR003439">
    <property type="entry name" value="ABC_transporter-like_ATP-bd"/>
</dbReference>
<dbReference type="InterPro" id="IPR017871">
    <property type="entry name" value="ABC_transporter-like_CS"/>
</dbReference>
<dbReference type="InterPro" id="IPR050166">
    <property type="entry name" value="ABC_transporter_ATP-bind"/>
</dbReference>
<dbReference type="InterPro" id="IPR027417">
    <property type="entry name" value="P-loop_NTPase"/>
</dbReference>
<dbReference type="PANTHER" id="PTHR42788:SF17">
    <property type="entry name" value="ALIPHATIC SULFONATES IMPORT ATP-BINDING PROTEIN SSUB"/>
    <property type="match status" value="1"/>
</dbReference>
<dbReference type="PANTHER" id="PTHR42788">
    <property type="entry name" value="TAURINE IMPORT ATP-BINDING PROTEIN-RELATED"/>
    <property type="match status" value="1"/>
</dbReference>
<dbReference type="Pfam" id="PF00005">
    <property type="entry name" value="ABC_tran"/>
    <property type="match status" value="1"/>
</dbReference>
<dbReference type="SMART" id="SM00382">
    <property type="entry name" value="AAA"/>
    <property type="match status" value="1"/>
</dbReference>
<dbReference type="SUPFAM" id="SSF52540">
    <property type="entry name" value="P-loop containing nucleoside triphosphate hydrolases"/>
    <property type="match status" value="1"/>
</dbReference>
<dbReference type="PROSITE" id="PS00211">
    <property type="entry name" value="ABC_TRANSPORTER_1"/>
    <property type="match status" value="1"/>
</dbReference>
<dbReference type="PROSITE" id="PS50893">
    <property type="entry name" value="ABC_TRANSPORTER_2"/>
    <property type="match status" value="1"/>
</dbReference>
<dbReference type="PROSITE" id="PS51291">
    <property type="entry name" value="SSUB"/>
    <property type="match status" value="1"/>
</dbReference>
<protein>
    <recommendedName>
        <fullName evidence="1">Aliphatic sulfonates import ATP-binding protein SsuB</fullName>
        <ecNumber evidence="1">7.6.2.14</ecNumber>
    </recommendedName>
</protein>
<gene>
    <name evidence="1" type="primary">ssuB</name>
    <name type="ordered locus">Rfer_1775</name>
</gene>
<evidence type="ECO:0000255" key="1">
    <source>
        <dbReference type="HAMAP-Rule" id="MF_01724"/>
    </source>
</evidence>
<evidence type="ECO:0000256" key="2">
    <source>
        <dbReference type="SAM" id="MobiDB-lite"/>
    </source>
</evidence>
<sequence length="278" mass="30604">MTTNSVTSGRRGEPLVLRDLSKRFGAREVLRNTQLRVEPGQFIAIVGRSGCGKSTLLRLVAGLETASAGSITVNDKLLTGLSDDTRIMFQDARLLPWKRIIDNVALGLPKDRRAEALKVLDQVGLADRANDWPARLSGGQRQRVSLARALVHKPRLLLLDEPLGALDALTRIEMHRLIEDLWRASGFTALLVTHDVQEAVALADRVILIEDGRIALDETVSLARPRSQGDAAFAALEKRILDRVLQKPAAPERESFTHPNDGEPRWPGVPAHGVRWAV</sequence>
<reference key="1">
    <citation type="submission" date="2006-02" db="EMBL/GenBank/DDBJ databases">
        <title>Complete sequence of chromosome of Rhodoferax ferrireducens DSM 15236.</title>
        <authorList>
            <person name="Copeland A."/>
            <person name="Lucas S."/>
            <person name="Lapidus A."/>
            <person name="Barry K."/>
            <person name="Detter J.C."/>
            <person name="Glavina del Rio T."/>
            <person name="Hammon N."/>
            <person name="Israni S."/>
            <person name="Pitluck S."/>
            <person name="Brettin T."/>
            <person name="Bruce D."/>
            <person name="Han C."/>
            <person name="Tapia R."/>
            <person name="Gilna P."/>
            <person name="Kiss H."/>
            <person name="Schmutz J."/>
            <person name="Larimer F."/>
            <person name="Land M."/>
            <person name="Kyrpides N."/>
            <person name="Ivanova N."/>
            <person name="Richardson P."/>
        </authorList>
    </citation>
    <scope>NUCLEOTIDE SEQUENCE [LARGE SCALE GENOMIC DNA]</scope>
    <source>
        <strain>ATCC BAA-621 / DSM 15236 / T118</strain>
    </source>
</reference>
<name>SSUB_ALBFT</name>
<keyword id="KW-0067">ATP-binding</keyword>
<keyword id="KW-0997">Cell inner membrane</keyword>
<keyword id="KW-1003">Cell membrane</keyword>
<keyword id="KW-0472">Membrane</keyword>
<keyword id="KW-0547">Nucleotide-binding</keyword>
<keyword id="KW-1185">Reference proteome</keyword>
<keyword id="KW-1278">Translocase</keyword>
<keyword id="KW-0813">Transport</keyword>